<evidence type="ECO:0000255" key="1">
    <source>
        <dbReference type="HAMAP-Rule" id="MF_01009"/>
    </source>
</evidence>
<proteinExistence type="inferred from homology"/>
<protein>
    <recommendedName>
        <fullName evidence="1">Thiosulfate sulfurtransferase GlpE</fullName>
        <ecNumber evidence="1">2.8.1.1</ecNumber>
    </recommendedName>
</protein>
<accession>B1JHY9</accession>
<feature type="chain" id="PRO_1000190115" description="Thiosulfate sulfurtransferase GlpE">
    <location>
        <begin position="1"/>
        <end position="109"/>
    </location>
</feature>
<feature type="domain" description="Rhodanese" evidence="1">
    <location>
        <begin position="17"/>
        <end position="105"/>
    </location>
</feature>
<feature type="active site" description="Cysteine persulfide intermediate" evidence="1">
    <location>
        <position position="65"/>
    </location>
</feature>
<dbReference type="EC" id="2.8.1.1" evidence="1"/>
<dbReference type="EMBL" id="CP000950">
    <property type="protein sequence ID" value="ACA66472.1"/>
    <property type="molecule type" value="Genomic_DNA"/>
</dbReference>
<dbReference type="RefSeq" id="WP_002218928.1">
    <property type="nucleotide sequence ID" value="NZ_CP009792.1"/>
</dbReference>
<dbReference type="SMR" id="B1JHY9"/>
<dbReference type="KEGG" id="ypy:YPK_0159"/>
<dbReference type="PATRIC" id="fig|502800.11.peg.765"/>
<dbReference type="GO" id="GO:0005737">
    <property type="term" value="C:cytoplasm"/>
    <property type="evidence" value="ECO:0007669"/>
    <property type="project" value="UniProtKB-SubCell"/>
</dbReference>
<dbReference type="GO" id="GO:0004792">
    <property type="term" value="F:thiosulfate-cyanide sulfurtransferase activity"/>
    <property type="evidence" value="ECO:0007669"/>
    <property type="project" value="UniProtKB-UniRule"/>
</dbReference>
<dbReference type="GO" id="GO:0006071">
    <property type="term" value="P:glycerol metabolic process"/>
    <property type="evidence" value="ECO:0007669"/>
    <property type="project" value="UniProtKB-UniRule"/>
</dbReference>
<dbReference type="CDD" id="cd01444">
    <property type="entry name" value="GlpE_ST"/>
    <property type="match status" value="1"/>
</dbReference>
<dbReference type="Gene3D" id="3.40.250.10">
    <property type="entry name" value="Rhodanese-like domain"/>
    <property type="match status" value="1"/>
</dbReference>
<dbReference type="HAMAP" id="MF_01009">
    <property type="entry name" value="Thiosulf_sulfurtr"/>
    <property type="match status" value="1"/>
</dbReference>
<dbReference type="InterPro" id="IPR050229">
    <property type="entry name" value="GlpE_sulfurtransferase"/>
</dbReference>
<dbReference type="InterPro" id="IPR001763">
    <property type="entry name" value="Rhodanese-like_dom"/>
</dbReference>
<dbReference type="InterPro" id="IPR036873">
    <property type="entry name" value="Rhodanese-like_dom_sf"/>
</dbReference>
<dbReference type="InterPro" id="IPR023695">
    <property type="entry name" value="Thiosulf_sulfurTrfase"/>
</dbReference>
<dbReference type="NCBIfam" id="NF001195">
    <property type="entry name" value="PRK00162.1"/>
    <property type="match status" value="1"/>
</dbReference>
<dbReference type="PANTHER" id="PTHR43031">
    <property type="entry name" value="FAD-DEPENDENT OXIDOREDUCTASE"/>
    <property type="match status" value="1"/>
</dbReference>
<dbReference type="PANTHER" id="PTHR43031:SF6">
    <property type="entry name" value="THIOSULFATE SULFURTRANSFERASE GLPE"/>
    <property type="match status" value="1"/>
</dbReference>
<dbReference type="Pfam" id="PF00581">
    <property type="entry name" value="Rhodanese"/>
    <property type="match status" value="1"/>
</dbReference>
<dbReference type="SMART" id="SM00450">
    <property type="entry name" value="RHOD"/>
    <property type="match status" value="1"/>
</dbReference>
<dbReference type="SUPFAM" id="SSF52821">
    <property type="entry name" value="Rhodanese/Cell cycle control phosphatase"/>
    <property type="match status" value="1"/>
</dbReference>
<dbReference type="PROSITE" id="PS50206">
    <property type="entry name" value="RHODANESE_3"/>
    <property type="match status" value="1"/>
</dbReference>
<gene>
    <name evidence="1" type="primary">glpE</name>
    <name type="ordered locus">YPK_0159</name>
</gene>
<reference key="1">
    <citation type="submission" date="2008-02" db="EMBL/GenBank/DDBJ databases">
        <title>Complete sequence of Yersinia pseudotuberculosis YPIII.</title>
        <authorList>
            <consortium name="US DOE Joint Genome Institute"/>
            <person name="Copeland A."/>
            <person name="Lucas S."/>
            <person name="Lapidus A."/>
            <person name="Glavina del Rio T."/>
            <person name="Dalin E."/>
            <person name="Tice H."/>
            <person name="Bruce D."/>
            <person name="Goodwin L."/>
            <person name="Pitluck S."/>
            <person name="Munk A.C."/>
            <person name="Brettin T."/>
            <person name="Detter J.C."/>
            <person name="Han C."/>
            <person name="Tapia R."/>
            <person name="Schmutz J."/>
            <person name="Larimer F."/>
            <person name="Land M."/>
            <person name="Hauser L."/>
            <person name="Challacombe J.F."/>
            <person name="Green L."/>
            <person name="Lindler L.E."/>
            <person name="Nikolich M.P."/>
            <person name="Richardson P."/>
        </authorList>
    </citation>
    <scope>NUCLEOTIDE SEQUENCE [LARGE SCALE GENOMIC DNA]</scope>
    <source>
        <strain>YPIII</strain>
    </source>
</reference>
<comment type="function">
    <text evidence="1">Transferase that catalyzes the transfer of sulfur from thiosulfate to thiophilic acceptors such as cyanide or dithiols. May function in a CysM-independent thiosulfate assimilation pathway by catalyzing the conversion of thiosulfate to sulfite, which can then be used for L-cysteine biosynthesis.</text>
</comment>
<comment type="catalytic activity">
    <reaction evidence="1">
        <text>thiosulfate + hydrogen cyanide = thiocyanate + sulfite + 2 H(+)</text>
        <dbReference type="Rhea" id="RHEA:16881"/>
        <dbReference type="ChEBI" id="CHEBI:15378"/>
        <dbReference type="ChEBI" id="CHEBI:17359"/>
        <dbReference type="ChEBI" id="CHEBI:18022"/>
        <dbReference type="ChEBI" id="CHEBI:18407"/>
        <dbReference type="ChEBI" id="CHEBI:33542"/>
        <dbReference type="EC" id="2.8.1.1"/>
    </reaction>
</comment>
<comment type="catalytic activity">
    <reaction evidence="1">
        <text>thiosulfate + [thioredoxin]-dithiol = [thioredoxin]-disulfide + hydrogen sulfide + sulfite + 2 H(+)</text>
        <dbReference type="Rhea" id="RHEA:83859"/>
        <dbReference type="Rhea" id="RHEA-COMP:10698"/>
        <dbReference type="Rhea" id="RHEA-COMP:10700"/>
        <dbReference type="ChEBI" id="CHEBI:15378"/>
        <dbReference type="ChEBI" id="CHEBI:17359"/>
        <dbReference type="ChEBI" id="CHEBI:29919"/>
        <dbReference type="ChEBI" id="CHEBI:29950"/>
        <dbReference type="ChEBI" id="CHEBI:33542"/>
        <dbReference type="ChEBI" id="CHEBI:50058"/>
    </reaction>
</comment>
<comment type="subcellular location">
    <subcellularLocation>
        <location evidence="1">Cytoplasm</location>
    </subcellularLocation>
</comment>
<comment type="similarity">
    <text evidence="1">Belongs to the GlpE family.</text>
</comment>
<sequence>MEQFEAISVEQAYLRWKEGKTALVDIRDPQSYEAGHAPGAFHLTNSSLHTFMQQTDFDQPVMVMCYHGNSSKGAAQYLLQQGFDVVYSIDGGFEAWARSYPQDITSESR</sequence>
<keyword id="KW-0963">Cytoplasm</keyword>
<keyword id="KW-0808">Transferase</keyword>
<organism>
    <name type="scientific">Yersinia pseudotuberculosis serotype O:3 (strain YPIII)</name>
    <dbReference type="NCBI Taxonomy" id="502800"/>
    <lineage>
        <taxon>Bacteria</taxon>
        <taxon>Pseudomonadati</taxon>
        <taxon>Pseudomonadota</taxon>
        <taxon>Gammaproteobacteria</taxon>
        <taxon>Enterobacterales</taxon>
        <taxon>Yersiniaceae</taxon>
        <taxon>Yersinia</taxon>
    </lineage>
</organism>
<name>GLPE_YERPY</name>